<comment type="function">
    <text evidence="1">The glycine cleavage system catalyzes the degradation of glycine.</text>
</comment>
<comment type="catalytic activity">
    <reaction evidence="1">
        <text>N(6)-[(R)-S(8)-aminomethyldihydrolipoyl]-L-lysyl-[protein] + (6S)-5,6,7,8-tetrahydrofolate = N(6)-[(R)-dihydrolipoyl]-L-lysyl-[protein] + (6R)-5,10-methylene-5,6,7,8-tetrahydrofolate + NH4(+)</text>
        <dbReference type="Rhea" id="RHEA:16945"/>
        <dbReference type="Rhea" id="RHEA-COMP:10475"/>
        <dbReference type="Rhea" id="RHEA-COMP:10492"/>
        <dbReference type="ChEBI" id="CHEBI:15636"/>
        <dbReference type="ChEBI" id="CHEBI:28938"/>
        <dbReference type="ChEBI" id="CHEBI:57453"/>
        <dbReference type="ChEBI" id="CHEBI:83100"/>
        <dbReference type="ChEBI" id="CHEBI:83143"/>
        <dbReference type="EC" id="2.1.2.10"/>
    </reaction>
</comment>
<comment type="subunit">
    <text evidence="1">The glycine cleavage system is composed of four proteins: P, T, L and H.</text>
</comment>
<comment type="similarity">
    <text evidence="1">Belongs to the GcvT family.</text>
</comment>
<evidence type="ECO:0000255" key="1">
    <source>
        <dbReference type="HAMAP-Rule" id="MF_00259"/>
    </source>
</evidence>
<keyword id="KW-0032">Aminotransferase</keyword>
<keyword id="KW-1185">Reference proteome</keyword>
<keyword id="KW-0808">Transferase</keyword>
<protein>
    <recommendedName>
        <fullName evidence="1">Probable aminomethyltransferase</fullName>
        <ecNumber evidence="1">2.1.2.10</ecNumber>
    </recommendedName>
    <alternativeName>
        <fullName evidence="1">Glycine cleavage system T protein</fullName>
    </alternativeName>
</protein>
<name>GCST_NATPD</name>
<dbReference type="EC" id="2.1.2.10" evidence="1"/>
<dbReference type="EMBL" id="CR936257">
    <property type="protein sequence ID" value="CAI50478.1"/>
    <property type="molecule type" value="Genomic_DNA"/>
</dbReference>
<dbReference type="RefSeq" id="WP_011324090.1">
    <property type="nucleotide sequence ID" value="NC_007426.1"/>
</dbReference>
<dbReference type="SMR" id="Q3IN28"/>
<dbReference type="STRING" id="348780.NP_4774A"/>
<dbReference type="EnsemblBacteria" id="CAI50478">
    <property type="protein sequence ID" value="CAI50478"/>
    <property type="gene ID" value="NP_4774A"/>
</dbReference>
<dbReference type="GeneID" id="3702746"/>
<dbReference type="KEGG" id="nph:NP_4774A"/>
<dbReference type="eggNOG" id="arCOG00756">
    <property type="taxonomic scope" value="Archaea"/>
</dbReference>
<dbReference type="HOGENOM" id="CLU_007884_10_2_2"/>
<dbReference type="OrthoDB" id="2001at2157"/>
<dbReference type="Proteomes" id="UP000002698">
    <property type="component" value="Chromosome"/>
</dbReference>
<dbReference type="GO" id="GO:0005960">
    <property type="term" value="C:glycine cleavage complex"/>
    <property type="evidence" value="ECO:0007669"/>
    <property type="project" value="InterPro"/>
</dbReference>
<dbReference type="GO" id="GO:0004047">
    <property type="term" value="F:aminomethyltransferase activity"/>
    <property type="evidence" value="ECO:0007669"/>
    <property type="project" value="UniProtKB-UniRule"/>
</dbReference>
<dbReference type="GO" id="GO:0008483">
    <property type="term" value="F:transaminase activity"/>
    <property type="evidence" value="ECO:0007669"/>
    <property type="project" value="UniProtKB-KW"/>
</dbReference>
<dbReference type="GO" id="GO:0019464">
    <property type="term" value="P:glycine decarboxylation via glycine cleavage system"/>
    <property type="evidence" value="ECO:0007669"/>
    <property type="project" value="UniProtKB-UniRule"/>
</dbReference>
<dbReference type="FunFam" id="2.40.30.110:FF:000003">
    <property type="entry name" value="Aminomethyltransferase"/>
    <property type="match status" value="1"/>
</dbReference>
<dbReference type="Gene3D" id="3.30.1360.120">
    <property type="entry name" value="Probable tRNA modification gtpase trme, domain 1"/>
    <property type="match status" value="1"/>
</dbReference>
<dbReference type="HAMAP" id="MF_00259">
    <property type="entry name" value="GcvT"/>
    <property type="match status" value="1"/>
</dbReference>
<dbReference type="InterPro" id="IPR006223">
    <property type="entry name" value="GCS_T"/>
</dbReference>
<dbReference type="InterPro" id="IPR022903">
    <property type="entry name" value="GCS_T_bac"/>
</dbReference>
<dbReference type="InterPro" id="IPR013977">
    <property type="entry name" value="GCST_C"/>
</dbReference>
<dbReference type="InterPro" id="IPR006222">
    <property type="entry name" value="GCV_T_N"/>
</dbReference>
<dbReference type="InterPro" id="IPR028896">
    <property type="entry name" value="GcvT/YgfZ/DmdA"/>
</dbReference>
<dbReference type="InterPro" id="IPR029043">
    <property type="entry name" value="GcvT/YgfZ_C"/>
</dbReference>
<dbReference type="InterPro" id="IPR027266">
    <property type="entry name" value="TrmE/GcvT_dom1"/>
</dbReference>
<dbReference type="NCBIfam" id="TIGR00528">
    <property type="entry name" value="gcvT"/>
    <property type="match status" value="1"/>
</dbReference>
<dbReference type="NCBIfam" id="NF001567">
    <property type="entry name" value="PRK00389.1"/>
    <property type="match status" value="1"/>
</dbReference>
<dbReference type="PANTHER" id="PTHR43757">
    <property type="entry name" value="AMINOMETHYLTRANSFERASE"/>
    <property type="match status" value="1"/>
</dbReference>
<dbReference type="PANTHER" id="PTHR43757:SF2">
    <property type="entry name" value="AMINOMETHYLTRANSFERASE, MITOCHONDRIAL"/>
    <property type="match status" value="1"/>
</dbReference>
<dbReference type="Pfam" id="PF01571">
    <property type="entry name" value="GCV_T"/>
    <property type="match status" value="1"/>
</dbReference>
<dbReference type="Pfam" id="PF08669">
    <property type="entry name" value="GCV_T_C"/>
    <property type="match status" value="1"/>
</dbReference>
<dbReference type="PIRSF" id="PIRSF006487">
    <property type="entry name" value="GcvT"/>
    <property type="match status" value="1"/>
</dbReference>
<dbReference type="SUPFAM" id="SSF101790">
    <property type="entry name" value="Aminomethyltransferase beta-barrel domain"/>
    <property type="match status" value="1"/>
</dbReference>
<dbReference type="SUPFAM" id="SSF103025">
    <property type="entry name" value="Folate-binding domain"/>
    <property type="match status" value="1"/>
</dbReference>
<reference key="1">
    <citation type="journal article" date="2005" name="Genome Res.">
        <title>Living with two extremes: conclusions from the genome sequence of Natronomonas pharaonis.</title>
        <authorList>
            <person name="Falb M."/>
            <person name="Pfeiffer F."/>
            <person name="Palm P."/>
            <person name="Rodewald K."/>
            <person name="Hickmann V."/>
            <person name="Tittor J."/>
            <person name="Oesterhelt D."/>
        </authorList>
    </citation>
    <scope>NUCLEOTIDE SEQUENCE [LARGE SCALE GENOMIC DNA]</scope>
    <source>
        <strain>ATCC 35678 / DSM 2160 / CIP 103997 / JCM 8858 / NBRC 14720 / NCIMB 2260 / Gabara</strain>
    </source>
</reference>
<sequence>MSLRTPPLFDAHTDAGAKLTEFGGWEMPVEFDSIRTEHDAVRESAGKFDISHMGEIEVSGPDAAALTNRLTTNDVASLAPGEATYAGITDDDGVLLDDTVVYRLPDGATYLFVPNAGNDELMAERWRSFADRWDLAATVDNATDDYAMVALQGPDALELLSSLDVDVFDLSRFEAAERTVAGVDCLVSRTGYTGEDGVELLFETAAAETVWSALDCQPCGLGARDTLRLEAGFLLGGNEFDPETNPRTPYEANIGFAVDLGTEFVGSDALAAQREAGPDERLVGLRLQDRGIARHGHDIVAAGDVVGEVTSGTMSPTLGAAIALGYVPVEYTEPGTELAVVVRGDEKDAVVEALPFYE</sequence>
<feature type="chain" id="PRO_1000047681" description="Probable aminomethyltransferase">
    <location>
        <begin position="1"/>
        <end position="358"/>
    </location>
</feature>
<organism>
    <name type="scientific">Natronomonas pharaonis (strain ATCC 35678 / DSM 2160 / CIP 103997 / JCM 8858 / NBRC 14720 / NCIMB 2260 / Gabara)</name>
    <name type="common">Halobacterium pharaonis</name>
    <dbReference type="NCBI Taxonomy" id="348780"/>
    <lineage>
        <taxon>Archaea</taxon>
        <taxon>Methanobacteriati</taxon>
        <taxon>Methanobacteriota</taxon>
        <taxon>Stenosarchaea group</taxon>
        <taxon>Halobacteria</taxon>
        <taxon>Halobacteriales</taxon>
        <taxon>Haloarculaceae</taxon>
        <taxon>Natronomonas</taxon>
    </lineage>
</organism>
<accession>Q3IN28</accession>
<gene>
    <name evidence="1" type="primary">gcvT</name>
    <name type="ordered locus">NP_4774A</name>
</gene>
<proteinExistence type="inferred from homology"/>